<evidence type="ECO:0000255" key="1">
    <source>
        <dbReference type="HAMAP-Rule" id="MF_00653"/>
    </source>
</evidence>
<sequence>MRVVILGSAAGGGLPQWNCRCPICTLARSEPDRVRPRTQSSIAVSADGSDWLLINASPDIRQQLFDNPQMHPREGLRHSPIRAVLLTNGDVDHVAGLLTLREGQPYTLYGTRGILDSVNANRVFDVMAEGVVARQPIGMDQRFEPLPGLSVTLFPVPGKVPLWLEDETMEIGAETETTVGALIEAGGRRLAYIPGCARVTDGLRARIAGVDALLFDGTVLHDDDMIRAGVGTKTGWRMGHVPMRGANGSIDALAAVEIGRRVFVHINNTNPVLVEGSPERVDVEAAGWTVAHDGLSLSL</sequence>
<protein>
    <recommendedName>
        <fullName evidence="1">Coenzyme PQQ synthesis protein B</fullName>
    </recommendedName>
    <alternativeName>
        <fullName evidence="1">Pyrroloquinoline quinone biosynthesis protein B</fullName>
    </alternativeName>
</protein>
<keyword id="KW-0884">PQQ biosynthesis</keyword>
<keyword id="KW-0813">Transport</keyword>
<gene>
    <name evidence="1" type="primary">pqqB</name>
    <name type="ordered locus">Mrad2831_0518</name>
</gene>
<dbReference type="EMBL" id="CP001001">
    <property type="protein sequence ID" value="ACB22529.1"/>
    <property type="molecule type" value="Genomic_DNA"/>
</dbReference>
<dbReference type="RefSeq" id="WP_012317525.1">
    <property type="nucleotide sequence ID" value="NC_010505.1"/>
</dbReference>
<dbReference type="SMR" id="B1LUE9"/>
<dbReference type="STRING" id="426355.Mrad2831_0518"/>
<dbReference type="GeneID" id="6136531"/>
<dbReference type="KEGG" id="mrd:Mrad2831_0518"/>
<dbReference type="PATRIC" id="fig|426355.14.peg.544"/>
<dbReference type="eggNOG" id="COG1235">
    <property type="taxonomic scope" value="Bacteria"/>
</dbReference>
<dbReference type="HOGENOM" id="CLU_061120_0_0_5"/>
<dbReference type="OrthoDB" id="9778305at2"/>
<dbReference type="UniPathway" id="UPA00539"/>
<dbReference type="Proteomes" id="UP000006589">
    <property type="component" value="Chromosome"/>
</dbReference>
<dbReference type="GO" id="GO:0018189">
    <property type="term" value="P:pyrroloquinoline quinone biosynthetic process"/>
    <property type="evidence" value="ECO:0007669"/>
    <property type="project" value="UniProtKB-UniRule"/>
</dbReference>
<dbReference type="CDD" id="cd16274">
    <property type="entry name" value="PQQB-like_MBL-fold"/>
    <property type="match status" value="1"/>
</dbReference>
<dbReference type="Gene3D" id="3.60.15.10">
    <property type="entry name" value="Ribonuclease Z/Hydroxyacylglutathione hydrolase-like"/>
    <property type="match status" value="1"/>
</dbReference>
<dbReference type="HAMAP" id="MF_00653">
    <property type="entry name" value="PQQ_syn_PqqB"/>
    <property type="match status" value="1"/>
</dbReference>
<dbReference type="InterPro" id="IPR001279">
    <property type="entry name" value="Metallo-B-lactamas"/>
</dbReference>
<dbReference type="InterPro" id="IPR011842">
    <property type="entry name" value="PQQ_synth_PqqB"/>
</dbReference>
<dbReference type="InterPro" id="IPR036866">
    <property type="entry name" value="RibonucZ/Hydroxyglut_hydro"/>
</dbReference>
<dbReference type="NCBIfam" id="TIGR02108">
    <property type="entry name" value="PQQ_syn_pqqB"/>
    <property type="match status" value="1"/>
</dbReference>
<dbReference type="PANTHER" id="PTHR42663:SF7">
    <property type="entry name" value="COENZYME PQQ SYNTHESIS PROTEIN B"/>
    <property type="match status" value="1"/>
</dbReference>
<dbReference type="PANTHER" id="PTHR42663">
    <property type="entry name" value="HYDROLASE C777.06C-RELATED-RELATED"/>
    <property type="match status" value="1"/>
</dbReference>
<dbReference type="Pfam" id="PF12706">
    <property type="entry name" value="Lactamase_B_2"/>
    <property type="match status" value="1"/>
</dbReference>
<dbReference type="SUPFAM" id="SSF56281">
    <property type="entry name" value="Metallo-hydrolase/oxidoreductase"/>
    <property type="match status" value="1"/>
</dbReference>
<comment type="function">
    <text evidence="1">May be involved in the transport of PQQ or its precursor to the periplasm.</text>
</comment>
<comment type="pathway">
    <text evidence="1">Cofactor biosynthesis; pyrroloquinoline quinone biosynthesis.</text>
</comment>
<comment type="similarity">
    <text evidence="1">Belongs to the PqqB family.</text>
</comment>
<feature type="chain" id="PRO_1000131165" description="Coenzyme PQQ synthesis protein B">
    <location>
        <begin position="1"/>
        <end position="299"/>
    </location>
</feature>
<name>PQQB_METRJ</name>
<accession>B1LUE9</accession>
<organism>
    <name type="scientific">Methylobacterium radiotolerans (strain ATCC 27329 / DSM 1819 / JCM 2831 / NBRC 15690 / NCIMB 10815 / 0-1)</name>
    <dbReference type="NCBI Taxonomy" id="426355"/>
    <lineage>
        <taxon>Bacteria</taxon>
        <taxon>Pseudomonadati</taxon>
        <taxon>Pseudomonadota</taxon>
        <taxon>Alphaproteobacteria</taxon>
        <taxon>Hyphomicrobiales</taxon>
        <taxon>Methylobacteriaceae</taxon>
        <taxon>Methylobacterium</taxon>
    </lineage>
</organism>
<proteinExistence type="inferred from homology"/>
<reference key="1">
    <citation type="submission" date="2008-03" db="EMBL/GenBank/DDBJ databases">
        <title>Complete sequence of chromosome of Methylobacterium radiotolerans JCM 2831.</title>
        <authorList>
            <consortium name="US DOE Joint Genome Institute"/>
            <person name="Copeland A."/>
            <person name="Lucas S."/>
            <person name="Lapidus A."/>
            <person name="Glavina del Rio T."/>
            <person name="Dalin E."/>
            <person name="Tice H."/>
            <person name="Bruce D."/>
            <person name="Goodwin L."/>
            <person name="Pitluck S."/>
            <person name="Kiss H."/>
            <person name="Brettin T."/>
            <person name="Detter J.C."/>
            <person name="Han C."/>
            <person name="Kuske C.R."/>
            <person name="Schmutz J."/>
            <person name="Larimer F."/>
            <person name="Land M."/>
            <person name="Hauser L."/>
            <person name="Kyrpides N."/>
            <person name="Mikhailova N."/>
            <person name="Marx C.J."/>
            <person name="Richardson P."/>
        </authorList>
    </citation>
    <scope>NUCLEOTIDE SEQUENCE [LARGE SCALE GENOMIC DNA]</scope>
    <source>
        <strain>ATCC 27329 / DSM 1819 / JCM 2831 / NBRC 15690 / NCIMB 10815 / 0-1</strain>
    </source>
</reference>